<reference key="1">
    <citation type="journal article" date="2000" name="Science">
        <title>The genome sequence of Drosophila melanogaster.</title>
        <authorList>
            <person name="Adams M.D."/>
            <person name="Celniker S.E."/>
            <person name="Holt R.A."/>
            <person name="Evans C.A."/>
            <person name="Gocayne J.D."/>
            <person name="Amanatides P.G."/>
            <person name="Scherer S.E."/>
            <person name="Li P.W."/>
            <person name="Hoskins R.A."/>
            <person name="Galle R.F."/>
            <person name="George R.A."/>
            <person name="Lewis S.E."/>
            <person name="Richards S."/>
            <person name="Ashburner M."/>
            <person name="Henderson S.N."/>
            <person name="Sutton G.G."/>
            <person name="Wortman J.R."/>
            <person name="Yandell M.D."/>
            <person name="Zhang Q."/>
            <person name="Chen L.X."/>
            <person name="Brandon R.C."/>
            <person name="Rogers Y.-H.C."/>
            <person name="Blazej R.G."/>
            <person name="Champe M."/>
            <person name="Pfeiffer B.D."/>
            <person name="Wan K.H."/>
            <person name="Doyle C."/>
            <person name="Baxter E.G."/>
            <person name="Helt G."/>
            <person name="Nelson C.R."/>
            <person name="Miklos G.L.G."/>
            <person name="Abril J.F."/>
            <person name="Agbayani A."/>
            <person name="An H.-J."/>
            <person name="Andrews-Pfannkoch C."/>
            <person name="Baldwin D."/>
            <person name="Ballew R.M."/>
            <person name="Basu A."/>
            <person name="Baxendale J."/>
            <person name="Bayraktaroglu L."/>
            <person name="Beasley E.M."/>
            <person name="Beeson K.Y."/>
            <person name="Benos P.V."/>
            <person name="Berman B.P."/>
            <person name="Bhandari D."/>
            <person name="Bolshakov S."/>
            <person name="Borkova D."/>
            <person name="Botchan M.R."/>
            <person name="Bouck J."/>
            <person name="Brokstein P."/>
            <person name="Brottier P."/>
            <person name="Burtis K.C."/>
            <person name="Busam D.A."/>
            <person name="Butler H."/>
            <person name="Cadieu E."/>
            <person name="Center A."/>
            <person name="Chandra I."/>
            <person name="Cherry J.M."/>
            <person name="Cawley S."/>
            <person name="Dahlke C."/>
            <person name="Davenport L.B."/>
            <person name="Davies P."/>
            <person name="de Pablos B."/>
            <person name="Delcher A."/>
            <person name="Deng Z."/>
            <person name="Mays A.D."/>
            <person name="Dew I."/>
            <person name="Dietz S.M."/>
            <person name="Dodson K."/>
            <person name="Doup L.E."/>
            <person name="Downes M."/>
            <person name="Dugan-Rocha S."/>
            <person name="Dunkov B.C."/>
            <person name="Dunn P."/>
            <person name="Durbin K.J."/>
            <person name="Evangelista C.C."/>
            <person name="Ferraz C."/>
            <person name="Ferriera S."/>
            <person name="Fleischmann W."/>
            <person name="Fosler C."/>
            <person name="Gabrielian A.E."/>
            <person name="Garg N.S."/>
            <person name="Gelbart W.M."/>
            <person name="Glasser K."/>
            <person name="Glodek A."/>
            <person name="Gong F."/>
            <person name="Gorrell J.H."/>
            <person name="Gu Z."/>
            <person name="Guan P."/>
            <person name="Harris M."/>
            <person name="Harris N.L."/>
            <person name="Harvey D.A."/>
            <person name="Heiman T.J."/>
            <person name="Hernandez J.R."/>
            <person name="Houck J."/>
            <person name="Hostin D."/>
            <person name="Houston K.A."/>
            <person name="Howland T.J."/>
            <person name="Wei M.-H."/>
            <person name="Ibegwam C."/>
            <person name="Jalali M."/>
            <person name="Kalush F."/>
            <person name="Karpen G.H."/>
            <person name="Ke Z."/>
            <person name="Kennison J.A."/>
            <person name="Ketchum K.A."/>
            <person name="Kimmel B.E."/>
            <person name="Kodira C.D."/>
            <person name="Kraft C.L."/>
            <person name="Kravitz S."/>
            <person name="Kulp D."/>
            <person name="Lai Z."/>
            <person name="Lasko P."/>
            <person name="Lei Y."/>
            <person name="Levitsky A.A."/>
            <person name="Li J.H."/>
            <person name="Li Z."/>
            <person name="Liang Y."/>
            <person name="Lin X."/>
            <person name="Liu X."/>
            <person name="Mattei B."/>
            <person name="McIntosh T.C."/>
            <person name="McLeod M.P."/>
            <person name="McPherson D."/>
            <person name="Merkulov G."/>
            <person name="Milshina N.V."/>
            <person name="Mobarry C."/>
            <person name="Morris J."/>
            <person name="Moshrefi A."/>
            <person name="Mount S.M."/>
            <person name="Moy M."/>
            <person name="Murphy B."/>
            <person name="Murphy L."/>
            <person name="Muzny D.M."/>
            <person name="Nelson D.L."/>
            <person name="Nelson D.R."/>
            <person name="Nelson K.A."/>
            <person name="Nixon K."/>
            <person name="Nusskern D.R."/>
            <person name="Pacleb J.M."/>
            <person name="Palazzolo M."/>
            <person name="Pittman G.S."/>
            <person name="Pan S."/>
            <person name="Pollard J."/>
            <person name="Puri V."/>
            <person name="Reese M.G."/>
            <person name="Reinert K."/>
            <person name="Remington K."/>
            <person name="Saunders R.D.C."/>
            <person name="Scheeler F."/>
            <person name="Shen H."/>
            <person name="Shue B.C."/>
            <person name="Siden-Kiamos I."/>
            <person name="Simpson M."/>
            <person name="Skupski M.P."/>
            <person name="Smith T.J."/>
            <person name="Spier E."/>
            <person name="Spradling A.C."/>
            <person name="Stapleton M."/>
            <person name="Strong R."/>
            <person name="Sun E."/>
            <person name="Svirskas R."/>
            <person name="Tector C."/>
            <person name="Turner R."/>
            <person name="Venter E."/>
            <person name="Wang A.H."/>
            <person name="Wang X."/>
            <person name="Wang Z.-Y."/>
            <person name="Wassarman D.A."/>
            <person name="Weinstock G.M."/>
            <person name="Weissenbach J."/>
            <person name="Williams S.M."/>
            <person name="Woodage T."/>
            <person name="Worley K.C."/>
            <person name="Wu D."/>
            <person name="Yang S."/>
            <person name="Yao Q.A."/>
            <person name="Ye J."/>
            <person name="Yeh R.-F."/>
            <person name="Zaveri J.S."/>
            <person name="Zhan M."/>
            <person name="Zhang G."/>
            <person name="Zhao Q."/>
            <person name="Zheng L."/>
            <person name="Zheng X.H."/>
            <person name="Zhong F.N."/>
            <person name="Zhong W."/>
            <person name="Zhou X."/>
            <person name="Zhu S.C."/>
            <person name="Zhu X."/>
            <person name="Smith H.O."/>
            <person name="Gibbs R.A."/>
            <person name="Myers E.W."/>
            <person name="Rubin G.M."/>
            <person name="Venter J.C."/>
        </authorList>
    </citation>
    <scope>NUCLEOTIDE SEQUENCE [LARGE SCALE GENOMIC DNA]</scope>
    <source>
        <strain>Berkeley</strain>
    </source>
</reference>
<reference key="2">
    <citation type="journal article" date="2002" name="Genome Biol.">
        <title>Annotation of the Drosophila melanogaster euchromatic genome: a systematic review.</title>
        <authorList>
            <person name="Misra S."/>
            <person name="Crosby M.A."/>
            <person name="Mungall C.J."/>
            <person name="Matthews B.B."/>
            <person name="Campbell K.S."/>
            <person name="Hradecky P."/>
            <person name="Huang Y."/>
            <person name="Kaminker J.S."/>
            <person name="Millburn G.H."/>
            <person name="Prochnik S.E."/>
            <person name="Smith C.D."/>
            <person name="Tupy J.L."/>
            <person name="Whitfield E.J."/>
            <person name="Bayraktaroglu L."/>
            <person name="Berman B.P."/>
            <person name="Bettencourt B.R."/>
            <person name="Celniker S.E."/>
            <person name="de Grey A.D.N.J."/>
            <person name="Drysdale R.A."/>
            <person name="Harris N.L."/>
            <person name="Richter J."/>
            <person name="Russo S."/>
            <person name="Schroeder A.J."/>
            <person name="Shu S.Q."/>
            <person name="Stapleton M."/>
            <person name="Yamada C."/>
            <person name="Ashburner M."/>
            <person name="Gelbart W.M."/>
            <person name="Rubin G.M."/>
            <person name="Lewis S.E."/>
        </authorList>
    </citation>
    <scope>GENOME REANNOTATION</scope>
    <source>
        <strain>Berkeley</strain>
    </source>
</reference>
<reference key="3">
    <citation type="journal article" date="2002" name="Genome Biol.">
        <title>A Drosophila full-length cDNA resource.</title>
        <authorList>
            <person name="Stapleton M."/>
            <person name="Carlson J.W."/>
            <person name="Brokstein P."/>
            <person name="Yu C."/>
            <person name="Champe M."/>
            <person name="George R.A."/>
            <person name="Guarin H."/>
            <person name="Kronmiller B."/>
            <person name="Pacleb J.M."/>
            <person name="Park S."/>
            <person name="Wan K.H."/>
            <person name="Rubin G.M."/>
            <person name="Celniker S.E."/>
        </authorList>
    </citation>
    <scope>NUCLEOTIDE SEQUENCE [LARGE SCALE MRNA]</scope>
    <source>
        <strain>Berkeley</strain>
        <tissue>Embryo</tissue>
    </source>
</reference>
<accession>Q8MT80</accession>
<accession>A0A0B4LGH6</accession>
<accession>Q9W176</accession>
<dbReference type="EC" id="2.4.1.-"/>
<dbReference type="EMBL" id="AE013599">
    <property type="protein sequence ID" value="AHN56635.1"/>
    <property type="molecule type" value="Genomic_DNA"/>
</dbReference>
<dbReference type="EMBL" id="AY118320">
    <property type="protein sequence ID" value="AAM48349.1"/>
    <property type="molecule type" value="mRNA"/>
</dbReference>
<dbReference type="RefSeq" id="NP_001286840.1">
    <property type="nucleotide sequence ID" value="NM_001299911.1"/>
</dbReference>
<dbReference type="BioGRID" id="2594345">
    <property type="interactions" value="3"/>
</dbReference>
<dbReference type="FunCoup" id="Q8MT80">
    <property type="interactions" value="163"/>
</dbReference>
<dbReference type="IntAct" id="Q8MT80">
    <property type="interactions" value="1"/>
</dbReference>
<dbReference type="STRING" id="7227.FBpp0310802"/>
<dbReference type="CAZy" id="GT22">
    <property type="family name" value="Glycosyltransferase Family 22"/>
</dbReference>
<dbReference type="PaxDb" id="7227-FBpp0072198"/>
<dbReference type="DNASU" id="19835548"/>
<dbReference type="EnsemblMetazoa" id="FBtr0344430">
    <property type="protein sequence ID" value="FBpp0310802"/>
    <property type="gene ID" value="FBgn0266438"/>
</dbReference>
<dbReference type="GeneID" id="19835548"/>
<dbReference type="KEGG" id="dme:Dmel_CG45068"/>
<dbReference type="UCSC" id="CG3419-RA">
    <property type="organism name" value="d. melanogaster"/>
</dbReference>
<dbReference type="AGR" id="FB:FBgn0266438"/>
<dbReference type="CTD" id="19835548"/>
<dbReference type="FlyBase" id="FBgn0266438">
    <property type="gene designation" value="PIG-Z"/>
</dbReference>
<dbReference type="VEuPathDB" id="VectorBase:FBgn0266438"/>
<dbReference type="eggNOG" id="KOG4123">
    <property type="taxonomic scope" value="Eukaryota"/>
</dbReference>
<dbReference type="GeneTree" id="ENSGT00950000183090"/>
<dbReference type="HOGENOM" id="CLU_022957_1_0_1"/>
<dbReference type="InParanoid" id="Q8MT80"/>
<dbReference type="OMA" id="YRICRLY"/>
<dbReference type="OrthoDB" id="10066429at2759"/>
<dbReference type="PhylomeDB" id="Q8MT80"/>
<dbReference type="Reactome" id="R-DME-162710">
    <property type="pathway name" value="Synthesis of glycosylphosphatidylinositol (GPI)"/>
</dbReference>
<dbReference type="UniPathway" id="UPA00196"/>
<dbReference type="BioGRID-ORCS" id="19835548">
    <property type="hits" value="0 hits in 1 CRISPR screen"/>
</dbReference>
<dbReference type="GenomeRNAi" id="19835548"/>
<dbReference type="PRO" id="PR:Q8MT80"/>
<dbReference type="Proteomes" id="UP000000803">
    <property type="component" value="Chromosome 2R"/>
</dbReference>
<dbReference type="Bgee" id="FBgn0266438">
    <property type="expression patterns" value="Expressed in ovary and 4 other cell types or tissues"/>
</dbReference>
<dbReference type="GO" id="GO:0005783">
    <property type="term" value="C:endoplasmic reticulum"/>
    <property type="evidence" value="ECO:0000250"/>
    <property type="project" value="UniProtKB"/>
</dbReference>
<dbReference type="GO" id="GO:0005789">
    <property type="term" value="C:endoplasmic reticulum membrane"/>
    <property type="evidence" value="ECO:0000318"/>
    <property type="project" value="GO_Central"/>
</dbReference>
<dbReference type="GO" id="GO:0000026">
    <property type="term" value="F:alpha-1,2-mannosyltransferase activity"/>
    <property type="evidence" value="ECO:0000250"/>
    <property type="project" value="UniProtKB"/>
</dbReference>
<dbReference type="GO" id="GO:0000030">
    <property type="term" value="F:mannosyltransferase activity"/>
    <property type="evidence" value="ECO:0000250"/>
    <property type="project" value="FlyBase"/>
</dbReference>
<dbReference type="GO" id="GO:0006506">
    <property type="term" value="P:GPI anchor biosynthetic process"/>
    <property type="evidence" value="ECO:0000250"/>
    <property type="project" value="UniProtKB"/>
</dbReference>
<dbReference type="InterPro" id="IPR005599">
    <property type="entry name" value="GPI_mannosylTrfase"/>
</dbReference>
<dbReference type="PANTHER" id="PTHR22760">
    <property type="entry name" value="GLYCOSYLTRANSFERASE"/>
    <property type="match status" value="1"/>
</dbReference>
<dbReference type="PANTHER" id="PTHR22760:SF3">
    <property type="entry name" value="GPI MANNOSYLTRANSFERASE 4"/>
    <property type="match status" value="1"/>
</dbReference>
<dbReference type="Pfam" id="PF03901">
    <property type="entry name" value="Glyco_transf_22"/>
    <property type="match status" value="1"/>
</dbReference>
<name>PIGZ_DROME</name>
<sequence>MRLTTLWQNRSPGDRHLSTYFCFAAVRLLLVFVPQLGYVHPDEFFQSVEVMTGDHFRLEHTRTWEFNNSLPVRSIVLPFALLRIPWSFYEFVAECLKAWWQLELLGTYAYVVFPRLIYTLISFSNDYCLFRICRLYGLRFEIRLLAMGSSWILLVFGTRTFSNSLEMAMCSWLLCLVSECMLRTNTVVYKKEFLEEKYDKAESISERVRIWKLKNSLPAHNLQHLMAMSTICVAGVFNRPTFLLFGAPMVFFWLLRGMGTRSITFRDFNLRIALFCLCALPALVLFIFCDSLYYQHLTLGELHMMHLSIDNFVFTPWNFIKANLDSAQTASHGVHPCYVHLMVNMPMLFNVLALASLGAFAQLLLRFFRAEYQVLPRFQSIVSLMSGAIFVPLFFLSLINHQEPRFLLPVTFPLILLHAPKLITGFSAKYPFQKDHPLLRLFYDKLLSSKASGPYLLKIWYVSNVALTLFFGFIHQAGVYPLAADISHVIATKPAATHVHLITSHIYSLPLHLINIPSSRVLHFNRLTHQRYRRPRDFYMYEYGGLPLDSLLQKVKLISGSCEVKKSGPSRRRYKLYLAIPASLSADLHEALVHSNASSYLNFELLKVFYPHLSTEAFPHLQGRHPCDVDAPHWAHDDLRGTCSAEQLPAFSFAYLNKQFSSFVHQLGLALYEIDVTRNKPRSVVIKKASMTETAA</sequence>
<comment type="function">
    <text evidence="1">Mannosyltransferase involved in glycosylphosphatidylinositol-anchor biosynthesis. Transfers a fourth mannose to some trimannosyl-GPIs during GPI precursor assembly (By similarity).</text>
</comment>
<comment type="pathway">
    <text>Glycolipid biosynthesis; glycosylphosphatidylinositol-anchor biosynthesis.</text>
</comment>
<comment type="subcellular location">
    <subcellularLocation>
        <location evidence="1">Endoplasmic reticulum membrane</location>
        <topology evidence="1">Multi-pass membrane protein</topology>
    </subcellularLocation>
</comment>
<comment type="similarity">
    <text evidence="3">Belongs to the glycosyltransferase 22 family. PIGZ subfamily.</text>
</comment>
<gene>
    <name evidence="4" type="primary">PIG-Z</name>
    <name evidence="4" type="ORF">CG45068</name>
</gene>
<proteinExistence type="evidence at transcript level"/>
<keyword id="KW-0256">Endoplasmic reticulum</keyword>
<keyword id="KW-0328">Glycosyltransferase</keyword>
<keyword id="KW-0337">GPI-anchor biosynthesis</keyword>
<keyword id="KW-0472">Membrane</keyword>
<keyword id="KW-1185">Reference proteome</keyword>
<keyword id="KW-0808">Transferase</keyword>
<keyword id="KW-0812">Transmembrane</keyword>
<keyword id="KW-1133">Transmembrane helix</keyword>
<organism>
    <name type="scientific">Drosophila melanogaster</name>
    <name type="common">Fruit fly</name>
    <dbReference type="NCBI Taxonomy" id="7227"/>
    <lineage>
        <taxon>Eukaryota</taxon>
        <taxon>Metazoa</taxon>
        <taxon>Ecdysozoa</taxon>
        <taxon>Arthropoda</taxon>
        <taxon>Hexapoda</taxon>
        <taxon>Insecta</taxon>
        <taxon>Pterygota</taxon>
        <taxon>Neoptera</taxon>
        <taxon>Endopterygota</taxon>
        <taxon>Diptera</taxon>
        <taxon>Brachycera</taxon>
        <taxon>Muscomorpha</taxon>
        <taxon>Ephydroidea</taxon>
        <taxon>Drosophilidae</taxon>
        <taxon>Drosophila</taxon>
        <taxon>Sophophora</taxon>
    </lineage>
</organism>
<protein>
    <recommendedName>
        <fullName>GPI mannosyltransferase 4</fullName>
        <ecNumber>2.4.1.-</ecNumber>
    </recommendedName>
    <alternativeName>
        <fullName>GPI mannosyltransferase IV</fullName>
        <shortName>GPI-MT-IV</shortName>
    </alternativeName>
    <alternativeName>
        <fullName evidence="4">Phosphatidylinositol glycan anchor biosynthesis protein class Z</fullName>
    </alternativeName>
</protein>
<feature type="chain" id="PRO_0000246270" description="GPI mannosyltransferase 4">
    <location>
        <begin position="1"/>
        <end position="696"/>
    </location>
</feature>
<feature type="transmembrane region" description="Helical" evidence="2">
    <location>
        <begin position="100"/>
        <end position="120"/>
    </location>
</feature>
<feature type="transmembrane region" description="Helical" evidence="2">
    <location>
        <begin position="125"/>
        <end position="142"/>
    </location>
</feature>
<feature type="transmembrane region" description="Helical" evidence="2">
    <location>
        <begin position="149"/>
        <end position="169"/>
    </location>
</feature>
<feature type="transmembrane region" description="Helical" evidence="2">
    <location>
        <begin position="185"/>
        <end position="205"/>
    </location>
</feature>
<feature type="transmembrane region" description="Helical" evidence="2">
    <location>
        <begin position="227"/>
        <end position="247"/>
    </location>
</feature>
<feature type="transmembrane region" description="Helical" evidence="2">
    <location>
        <begin position="338"/>
        <end position="358"/>
    </location>
</feature>
<evidence type="ECO:0000250" key="1"/>
<evidence type="ECO:0000255" key="2"/>
<evidence type="ECO:0000305" key="3"/>
<evidence type="ECO:0000312" key="4">
    <source>
        <dbReference type="FlyBase" id="FBgn0266438"/>
    </source>
</evidence>